<dbReference type="EMBL" id="AE004437">
    <property type="protein sequence ID" value="AAG19917.1"/>
    <property type="molecule type" value="Genomic_DNA"/>
</dbReference>
<dbReference type="PIR" id="A84319">
    <property type="entry name" value="A84319"/>
</dbReference>
<dbReference type="RefSeq" id="WP_010903214.1">
    <property type="nucleotide sequence ID" value="NC_002607.1"/>
</dbReference>
<dbReference type="SMR" id="Q9HPF2"/>
<dbReference type="STRING" id="64091.VNG_1665G"/>
<dbReference type="PaxDb" id="64091-VNG_1665G"/>
<dbReference type="GeneID" id="89349916"/>
<dbReference type="KEGG" id="hal:VNG_1665G"/>
<dbReference type="PATRIC" id="fig|64091.14.peg.1268"/>
<dbReference type="HOGENOM" id="CLU_041732_2_0_2"/>
<dbReference type="InParanoid" id="Q9HPF2"/>
<dbReference type="OrthoDB" id="17644at2157"/>
<dbReference type="PhylomeDB" id="Q9HPF2"/>
<dbReference type="Proteomes" id="UP000000554">
    <property type="component" value="Chromosome"/>
</dbReference>
<dbReference type="GO" id="GO:0005524">
    <property type="term" value="F:ATP binding"/>
    <property type="evidence" value="ECO:0007669"/>
    <property type="project" value="UniProtKB-UniRule"/>
</dbReference>
<dbReference type="GO" id="GO:0016887">
    <property type="term" value="F:ATP hydrolysis activity"/>
    <property type="evidence" value="ECO:0007669"/>
    <property type="project" value="InterPro"/>
</dbReference>
<dbReference type="GO" id="GO:0140664">
    <property type="term" value="F:ATP-dependent DNA damage sensor activity"/>
    <property type="evidence" value="ECO:0007669"/>
    <property type="project" value="InterPro"/>
</dbReference>
<dbReference type="GO" id="GO:0003684">
    <property type="term" value="F:damaged DNA binding"/>
    <property type="evidence" value="ECO:0007669"/>
    <property type="project" value="UniProtKB-UniRule"/>
</dbReference>
<dbReference type="GO" id="GO:0006310">
    <property type="term" value="P:DNA recombination"/>
    <property type="evidence" value="ECO:0007669"/>
    <property type="project" value="UniProtKB-UniRule"/>
</dbReference>
<dbReference type="GO" id="GO:0006281">
    <property type="term" value="P:DNA repair"/>
    <property type="evidence" value="ECO:0007669"/>
    <property type="project" value="UniProtKB-UniRule"/>
</dbReference>
<dbReference type="Gene3D" id="3.40.50.300">
    <property type="entry name" value="P-loop containing nucleotide triphosphate hydrolases"/>
    <property type="match status" value="1"/>
</dbReference>
<dbReference type="HAMAP" id="MF_00350">
    <property type="entry name" value="RadB"/>
    <property type="match status" value="1"/>
</dbReference>
<dbReference type="InterPro" id="IPR003593">
    <property type="entry name" value="AAA+_ATPase"/>
</dbReference>
<dbReference type="InterPro" id="IPR013632">
    <property type="entry name" value="DNA_recomb/repair_Rad51_C"/>
</dbReference>
<dbReference type="InterPro" id="IPR011939">
    <property type="entry name" value="DNA_repair_and_recomb_RadB"/>
</dbReference>
<dbReference type="InterPro" id="IPR027417">
    <property type="entry name" value="P-loop_NTPase"/>
</dbReference>
<dbReference type="InterPro" id="IPR020588">
    <property type="entry name" value="RecA_ATP-bd"/>
</dbReference>
<dbReference type="NCBIfam" id="NF006861">
    <property type="entry name" value="PRK09361.1-1"/>
    <property type="match status" value="1"/>
</dbReference>
<dbReference type="NCBIfam" id="TIGR02237">
    <property type="entry name" value="recomb_radB"/>
    <property type="match status" value="1"/>
</dbReference>
<dbReference type="PANTHER" id="PTHR22942:SF47">
    <property type="entry name" value="DNA REPAIR AND RECOMBINATION PROTEIN RADB"/>
    <property type="match status" value="1"/>
</dbReference>
<dbReference type="PANTHER" id="PTHR22942">
    <property type="entry name" value="RECA/RAD51/RADA DNA STRAND-PAIRING FAMILY MEMBER"/>
    <property type="match status" value="1"/>
</dbReference>
<dbReference type="Pfam" id="PF08423">
    <property type="entry name" value="Rad51"/>
    <property type="match status" value="1"/>
</dbReference>
<dbReference type="PIRSF" id="PIRSF003336">
    <property type="entry name" value="RadB"/>
    <property type="match status" value="1"/>
</dbReference>
<dbReference type="PRINTS" id="PR01874">
    <property type="entry name" value="DNAREPAIRADA"/>
</dbReference>
<dbReference type="SMART" id="SM00382">
    <property type="entry name" value="AAA"/>
    <property type="match status" value="1"/>
</dbReference>
<dbReference type="SUPFAM" id="SSF52540">
    <property type="entry name" value="P-loop containing nucleoside triphosphate hydrolases"/>
    <property type="match status" value="1"/>
</dbReference>
<dbReference type="PROSITE" id="PS50162">
    <property type="entry name" value="RECA_2"/>
    <property type="match status" value="1"/>
</dbReference>
<keyword id="KW-0067">ATP-binding</keyword>
<keyword id="KW-0227">DNA damage</keyword>
<keyword id="KW-0233">DNA recombination</keyword>
<keyword id="KW-0238">DNA-binding</keyword>
<keyword id="KW-0547">Nucleotide-binding</keyword>
<keyword id="KW-1185">Reference proteome</keyword>
<proteinExistence type="inferred from homology"/>
<protein>
    <recommendedName>
        <fullName>DNA repair and recombination protein RadB</fullName>
    </recommendedName>
</protein>
<comment type="function">
    <text evidence="1">Involved in DNA repair and in homologous recombination. May regulate the cleavage reactions of the branch-structured DNA. Has a very weak ATPase activity that is not stimulated by DNA. Binds DNA but does not promote DNA strands exchange (By similarity).</text>
</comment>
<comment type="similarity">
    <text evidence="3">Belongs to the eukaryotic RecA-like protein family. RadB subfamily.</text>
</comment>
<evidence type="ECO:0000250" key="1"/>
<evidence type="ECO:0000255" key="2"/>
<evidence type="ECO:0000305" key="3"/>
<reference key="1">
    <citation type="journal article" date="2000" name="Proc. Natl. Acad. Sci. U.S.A.">
        <title>Genome sequence of Halobacterium species NRC-1.</title>
        <authorList>
            <person name="Ng W.V."/>
            <person name="Kennedy S.P."/>
            <person name="Mahairas G.G."/>
            <person name="Berquist B."/>
            <person name="Pan M."/>
            <person name="Shukla H.D."/>
            <person name="Lasky S.R."/>
            <person name="Baliga N.S."/>
            <person name="Thorsson V."/>
            <person name="Sbrogna J."/>
            <person name="Swartzell S."/>
            <person name="Weir D."/>
            <person name="Hall J."/>
            <person name="Dahl T.A."/>
            <person name="Welti R."/>
            <person name="Goo Y.A."/>
            <person name="Leithauser B."/>
            <person name="Keller K."/>
            <person name="Cruz R."/>
            <person name="Danson M.J."/>
            <person name="Hough D.W."/>
            <person name="Maddocks D.G."/>
            <person name="Jablonski P.E."/>
            <person name="Krebs M.P."/>
            <person name="Angevine C.M."/>
            <person name="Dale H."/>
            <person name="Isenbarger T.A."/>
            <person name="Peck R.F."/>
            <person name="Pohlschroder M."/>
            <person name="Spudich J.L."/>
            <person name="Jung K.-H."/>
            <person name="Alam M."/>
            <person name="Freitas T."/>
            <person name="Hou S."/>
            <person name="Daniels C.J."/>
            <person name="Dennis P.P."/>
            <person name="Omer A.D."/>
            <person name="Ebhardt H."/>
            <person name="Lowe T.M."/>
            <person name="Liang P."/>
            <person name="Riley M."/>
            <person name="Hood L."/>
            <person name="DasSarma S."/>
        </authorList>
    </citation>
    <scope>NUCLEOTIDE SEQUENCE [LARGE SCALE GENOMIC DNA]</scope>
    <source>
        <strain>ATCC 700922 / JCM 11081 / NRC-1</strain>
    </source>
</reference>
<sequence length="236" mass="25065">MREDDTHLPTGCGALDELLGGGVERGTVTQLYGPPAAGKTNVALTTAVTTAAAGGLAVYVDTEGLSLARFQQLLEARATDPEAASANVIVSDAHDFDEQAQAVRDTADFADRADLIVVDSVTGFYRLARGGDDTTGDALRQVADQITHLLSLARKHDLAVVVTNQVFTDVDNDSDRARPLGGHTLAHWTGTVLRLDRFRGGTRRATLEKHRAKPDGEHAQFQITDGGIDAASADDY</sequence>
<gene>
    <name type="primary">radB</name>
    <name type="synonym">radA2</name>
    <name type="ordered locus">VNG_1665G</name>
</gene>
<name>RADB_HALSA</name>
<feature type="chain" id="PRO_0000150112" description="DNA repair and recombination protein RadB">
    <location>
        <begin position="1"/>
        <end position="236"/>
    </location>
</feature>
<feature type="binding site" evidence="2">
    <location>
        <begin position="33"/>
        <end position="40"/>
    </location>
    <ligand>
        <name>ATP</name>
        <dbReference type="ChEBI" id="CHEBI:30616"/>
    </ligand>
</feature>
<organism>
    <name type="scientific">Halobacterium salinarum (strain ATCC 700922 / JCM 11081 / NRC-1)</name>
    <name type="common">Halobacterium halobium</name>
    <dbReference type="NCBI Taxonomy" id="64091"/>
    <lineage>
        <taxon>Archaea</taxon>
        <taxon>Methanobacteriati</taxon>
        <taxon>Methanobacteriota</taxon>
        <taxon>Stenosarchaea group</taxon>
        <taxon>Halobacteria</taxon>
        <taxon>Halobacteriales</taxon>
        <taxon>Halobacteriaceae</taxon>
        <taxon>Halobacterium</taxon>
        <taxon>Halobacterium salinarum NRC-34001</taxon>
    </lineage>
</organism>
<accession>Q9HPF2</accession>